<evidence type="ECO:0000255" key="1">
    <source>
        <dbReference type="HAMAP-Rule" id="MF_00654"/>
    </source>
</evidence>
<name>PQQC_RHOPA</name>
<feature type="chain" id="PRO_0000219987" description="Pyrroloquinoline-quinone synthase">
    <location>
        <begin position="1"/>
        <end position="254"/>
    </location>
</feature>
<accession>Q6N8F5</accession>
<dbReference type="EC" id="1.3.3.11" evidence="1"/>
<dbReference type="EMBL" id="BX572599">
    <property type="protein sequence ID" value="CAE27389.1"/>
    <property type="molecule type" value="Genomic_DNA"/>
</dbReference>
<dbReference type="RefSeq" id="WP_011157503.1">
    <property type="nucleotide sequence ID" value="NZ_CP116810.1"/>
</dbReference>
<dbReference type="SMR" id="Q6N8F5"/>
<dbReference type="STRING" id="258594.RPA1948"/>
<dbReference type="GeneID" id="66892992"/>
<dbReference type="eggNOG" id="COG5424">
    <property type="taxonomic scope" value="Bacteria"/>
</dbReference>
<dbReference type="HOGENOM" id="CLU_080136_0_0_5"/>
<dbReference type="PhylomeDB" id="Q6N8F5"/>
<dbReference type="UniPathway" id="UPA00539"/>
<dbReference type="GO" id="GO:0033732">
    <property type="term" value="F:pyrroloquinoline-quinone synthase activity"/>
    <property type="evidence" value="ECO:0007669"/>
    <property type="project" value="UniProtKB-EC"/>
</dbReference>
<dbReference type="GO" id="GO:0018189">
    <property type="term" value="P:pyrroloquinoline quinone biosynthetic process"/>
    <property type="evidence" value="ECO:0007669"/>
    <property type="project" value="UniProtKB-UniRule"/>
</dbReference>
<dbReference type="GO" id="GO:0006790">
    <property type="term" value="P:sulfur compound metabolic process"/>
    <property type="evidence" value="ECO:0007669"/>
    <property type="project" value="UniProtKB-ARBA"/>
</dbReference>
<dbReference type="Gene3D" id="1.20.910.10">
    <property type="entry name" value="Heme oxygenase-like"/>
    <property type="match status" value="1"/>
</dbReference>
<dbReference type="HAMAP" id="MF_00654">
    <property type="entry name" value="PQQ_syn_PqqC"/>
    <property type="match status" value="1"/>
</dbReference>
<dbReference type="InterPro" id="IPR016084">
    <property type="entry name" value="Haem_Oase-like_multi-hlx"/>
</dbReference>
<dbReference type="InterPro" id="IPR011845">
    <property type="entry name" value="PqqC"/>
</dbReference>
<dbReference type="InterPro" id="IPR039068">
    <property type="entry name" value="PqqC-like"/>
</dbReference>
<dbReference type="InterPro" id="IPR004305">
    <property type="entry name" value="Thiaminase-2/PQQC"/>
</dbReference>
<dbReference type="NCBIfam" id="TIGR02111">
    <property type="entry name" value="PQQ_syn_pqqC"/>
    <property type="match status" value="1"/>
</dbReference>
<dbReference type="PANTHER" id="PTHR40279:SF3">
    <property type="entry name" value="4-AMINOBENZOATE SYNTHASE"/>
    <property type="match status" value="1"/>
</dbReference>
<dbReference type="PANTHER" id="PTHR40279">
    <property type="entry name" value="PQQC-LIKE PROTEIN"/>
    <property type="match status" value="1"/>
</dbReference>
<dbReference type="Pfam" id="PF03070">
    <property type="entry name" value="TENA_THI-4"/>
    <property type="match status" value="1"/>
</dbReference>
<dbReference type="SUPFAM" id="SSF48613">
    <property type="entry name" value="Heme oxygenase-like"/>
    <property type="match status" value="1"/>
</dbReference>
<organism>
    <name type="scientific">Rhodopseudomonas palustris (strain ATCC BAA-98 / CGA009)</name>
    <dbReference type="NCBI Taxonomy" id="258594"/>
    <lineage>
        <taxon>Bacteria</taxon>
        <taxon>Pseudomonadati</taxon>
        <taxon>Pseudomonadota</taxon>
        <taxon>Alphaproteobacteria</taxon>
        <taxon>Hyphomicrobiales</taxon>
        <taxon>Nitrobacteraceae</taxon>
        <taxon>Rhodopseudomonas</taxon>
    </lineage>
</organism>
<comment type="function">
    <text evidence="1">Ring cyclization and eight-electron oxidation of 3a-(2-amino-2-carboxyethyl)-4,5-dioxo-4,5,6,7,8,9-hexahydroquinoline-7,9-dicarboxylic-acid to PQQ.</text>
</comment>
<comment type="catalytic activity">
    <reaction evidence="1">
        <text>6-(2-amino-2-carboxyethyl)-7,8-dioxo-1,2,3,4,7,8-hexahydroquinoline-2,4-dicarboxylate + 3 O2 = pyrroloquinoline quinone + 2 H2O2 + 2 H2O + H(+)</text>
        <dbReference type="Rhea" id="RHEA:10692"/>
        <dbReference type="ChEBI" id="CHEBI:15377"/>
        <dbReference type="ChEBI" id="CHEBI:15378"/>
        <dbReference type="ChEBI" id="CHEBI:15379"/>
        <dbReference type="ChEBI" id="CHEBI:16240"/>
        <dbReference type="ChEBI" id="CHEBI:58442"/>
        <dbReference type="ChEBI" id="CHEBI:58778"/>
        <dbReference type="EC" id="1.3.3.11"/>
    </reaction>
</comment>
<comment type="pathway">
    <text evidence="1">Cofactor biosynthesis; pyrroloquinoline quinone biosynthesis.</text>
</comment>
<comment type="similarity">
    <text evidence="1">Belongs to the PqqC family.</text>
</comment>
<gene>
    <name evidence="1" type="primary">pqqC</name>
    <name type="ordered locus">RPA1948</name>
</gene>
<protein>
    <recommendedName>
        <fullName evidence="1">Pyrroloquinoline-quinone synthase</fullName>
        <ecNumber evidence="1">1.3.3.11</ecNumber>
    </recommendedName>
    <alternativeName>
        <fullName evidence="1">Coenzyme PQQ synthesis protein C</fullName>
    </alternativeName>
    <alternativeName>
        <fullName evidence="1">Pyrroloquinoline quinone biosynthesis protein C</fullName>
    </alternativeName>
</protein>
<sequence>MNAMTAFSLNGAAPLANADELEAALRQIGAARYHNLHPFHRLLHGGKLNKGQVQAWALNRYYYQSSIPIKDAVVISRFRDRATRVEWRHRIEDHDGDLSSEGGIERWLKLTEGLGLDSGYVESTQGILPATRFAVDAYVHFVRDRTPLEAIASSLTELFAPNLHEERIAGMLAHYDFVNPEIMSYFKRRLEQAPRDADFALRHVKQHATTPAEREAVCNALIFKTNVLWAQLDALHHAYVDGHIPPGAFVPQGF</sequence>
<reference key="1">
    <citation type="journal article" date="2004" name="Nat. Biotechnol.">
        <title>Complete genome sequence of the metabolically versatile photosynthetic bacterium Rhodopseudomonas palustris.</title>
        <authorList>
            <person name="Larimer F.W."/>
            <person name="Chain P."/>
            <person name="Hauser L."/>
            <person name="Lamerdin J.E."/>
            <person name="Malfatti S."/>
            <person name="Do L."/>
            <person name="Land M.L."/>
            <person name="Pelletier D.A."/>
            <person name="Beatty J.T."/>
            <person name="Lang A.S."/>
            <person name="Tabita F.R."/>
            <person name="Gibson J.L."/>
            <person name="Hanson T.E."/>
            <person name="Bobst C."/>
            <person name="Torres y Torres J.L."/>
            <person name="Peres C."/>
            <person name="Harrison F.H."/>
            <person name="Gibson J."/>
            <person name="Harwood C.S."/>
        </authorList>
    </citation>
    <scope>NUCLEOTIDE SEQUENCE [LARGE SCALE GENOMIC DNA]</scope>
    <source>
        <strain>ATCC BAA-98 / CGA009</strain>
    </source>
</reference>
<proteinExistence type="inferred from homology"/>
<keyword id="KW-0560">Oxidoreductase</keyword>
<keyword id="KW-0884">PQQ biosynthesis</keyword>